<organism>
    <name type="scientific">Neisseria meningitidis serogroup C (strain 053442)</name>
    <dbReference type="NCBI Taxonomy" id="374833"/>
    <lineage>
        <taxon>Bacteria</taxon>
        <taxon>Pseudomonadati</taxon>
        <taxon>Pseudomonadota</taxon>
        <taxon>Betaproteobacteria</taxon>
        <taxon>Neisseriales</taxon>
        <taxon>Neisseriaceae</taxon>
        <taxon>Neisseria</taxon>
    </lineage>
</organism>
<evidence type="ECO:0000255" key="1">
    <source>
        <dbReference type="HAMAP-Rule" id="MF_00054"/>
    </source>
</evidence>
<reference key="1">
    <citation type="journal article" date="2008" name="Genomics">
        <title>Characterization of ST-4821 complex, a unique Neisseria meningitidis clone.</title>
        <authorList>
            <person name="Peng J."/>
            <person name="Yang L."/>
            <person name="Yang F."/>
            <person name="Yang J."/>
            <person name="Yan Y."/>
            <person name="Nie H."/>
            <person name="Zhang X."/>
            <person name="Xiong Z."/>
            <person name="Jiang Y."/>
            <person name="Cheng F."/>
            <person name="Xu X."/>
            <person name="Chen S."/>
            <person name="Sun L."/>
            <person name="Li W."/>
            <person name="Shen Y."/>
            <person name="Shao Z."/>
            <person name="Liang X."/>
            <person name="Xu J."/>
            <person name="Jin Q."/>
        </authorList>
    </citation>
    <scope>NUCLEOTIDE SEQUENCE [LARGE SCALE GENOMIC DNA]</scope>
    <source>
        <strain>053442</strain>
    </source>
</reference>
<sequence>MARKTPISLYRNIGISAHIDAGKTTTTERILFYTGLTHKLGEVHDGAATTDYMEQEQERGITITSAAVTSYWSGMAKQFPEHRFNIIDTPGHVDFTVEVERSMRVLDGAVMVYCAVGGVQPQSETVWRQANKYQVPRLAFVNKMDRQGANFFRVVEQMKTRLRANPVPIVIPVGAEDNFSGVVDLLKMKSIIWNEADKGTTFTYGDIPAELVETAEEWRQNMIEAAAEASEELMDKYLGGDELTEEEIVGALRQRTLAGEIQPMLCGSAFKNKGVQRMLDAVVELLPAPTDIPPVQGVNPNTEEADSRQASDEEKFSALAFKMLNDKYVGQLTFIRVYSGVVKSGDTVLNSVKGTRERIGRLVQMTAADRTEIEEVRAGDIAAAIGLKDVTTGETLCAESAPIILERMEFPEPVIHIAVEPKTKADQEKMGIALNRLAKEDPSFRVRTDEESGQTIISGMGELHLEIIVDRMKREFGVEANIGAPQVAYRETIRKAVKAEYKHAKQSGGKGQYGHVVIEMEPMEPGGEGYEFIDEIKGGVIPREFIPSVDKGIRDTLPNGIVAGYPVVDVRIRLVFGSYHDVDSSQLAFELAASQAFKEGMRQASPALLEPIMAVEVETPEEYMGDVMGDLNRRRGVVLGMDDDGIGGKKVRAEVPLAEMFGYSTDLRSATQGRATYSMEFKKYSEAPAHIAAAVTEARKG</sequence>
<dbReference type="EMBL" id="CP000381">
    <property type="protein sequence ID" value="ABX74132.1"/>
    <property type="molecule type" value="Genomic_DNA"/>
</dbReference>
<dbReference type="RefSeq" id="WP_002215392.1">
    <property type="nucleotide sequence ID" value="NC_010120.1"/>
</dbReference>
<dbReference type="SMR" id="A9M3X0"/>
<dbReference type="GeneID" id="93387212"/>
<dbReference type="KEGG" id="nmn:NMCC_2009"/>
<dbReference type="HOGENOM" id="CLU_002794_4_1_4"/>
<dbReference type="Proteomes" id="UP000001177">
    <property type="component" value="Chromosome"/>
</dbReference>
<dbReference type="GO" id="GO:0005737">
    <property type="term" value="C:cytoplasm"/>
    <property type="evidence" value="ECO:0007669"/>
    <property type="project" value="UniProtKB-SubCell"/>
</dbReference>
<dbReference type="GO" id="GO:0005525">
    <property type="term" value="F:GTP binding"/>
    <property type="evidence" value="ECO:0007669"/>
    <property type="project" value="UniProtKB-UniRule"/>
</dbReference>
<dbReference type="GO" id="GO:0003924">
    <property type="term" value="F:GTPase activity"/>
    <property type="evidence" value="ECO:0007669"/>
    <property type="project" value="InterPro"/>
</dbReference>
<dbReference type="GO" id="GO:0097216">
    <property type="term" value="F:guanosine tetraphosphate binding"/>
    <property type="evidence" value="ECO:0007669"/>
    <property type="project" value="UniProtKB-ARBA"/>
</dbReference>
<dbReference type="GO" id="GO:0003746">
    <property type="term" value="F:translation elongation factor activity"/>
    <property type="evidence" value="ECO:0007669"/>
    <property type="project" value="UniProtKB-UniRule"/>
</dbReference>
<dbReference type="GO" id="GO:0032790">
    <property type="term" value="P:ribosome disassembly"/>
    <property type="evidence" value="ECO:0007669"/>
    <property type="project" value="TreeGrafter"/>
</dbReference>
<dbReference type="CDD" id="cd01886">
    <property type="entry name" value="EF-G"/>
    <property type="match status" value="1"/>
</dbReference>
<dbReference type="CDD" id="cd16262">
    <property type="entry name" value="EFG_III"/>
    <property type="match status" value="1"/>
</dbReference>
<dbReference type="CDD" id="cd01434">
    <property type="entry name" value="EFG_mtEFG1_IV"/>
    <property type="match status" value="1"/>
</dbReference>
<dbReference type="CDD" id="cd03713">
    <property type="entry name" value="EFG_mtEFG_C"/>
    <property type="match status" value="1"/>
</dbReference>
<dbReference type="CDD" id="cd04088">
    <property type="entry name" value="EFG_mtEFG_II"/>
    <property type="match status" value="1"/>
</dbReference>
<dbReference type="FunFam" id="2.40.30.10:FF:000006">
    <property type="entry name" value="Elongation factor G"/>
    <property type="match status" value="1"/>
</dbReference>
<dbReference type="FunFam" id="3.30.230.10:FF:000003">
    <property type="entry name" value="Elongation factor G"/>
    <property type="match status" value="1"/>
</dbReference>
<dbReference type="FunFam" id="3.30.70.240:FF:000001">
    <property type="entry name" value="Elongation factor G"/>
    <property type="match status" value="1"/>
</dbReference>
<dbReference type="FunFam" id="3.30.70.870:FF:000001">
    <property type="entry name" value="Elongation factor G"/>
    <property type="match status" value="1"/>
</dbReference>
<dbReference type="FunFam" id="3.40.50.300:FF:000029">
    <property type="entry name" value="Elongation factor G"/>
    <property type="match status" value="1"/>
</dbReference>
<dbReference type="Gene3D" id="3.30.230.10">
    <property type="match status" value="1"/>
</dbReference>
<dbReference type="Gene3D" id="3.30.70.240">
    <property type="match status" value="1"/>
</dbReference>
<dbReference type="Gene3D" id="3.30.70.870">
    <property type="entry name" value="Elongation Factor G (Translational Gtpase), domain 3"/>
    <property type="match status" value="1"/>
</dbReference>
<dbReference type="Gene3D" id="3.40.50.300">
    <property type="entry name" value="P-loop containing nucleotide triphosphate hydrolases"/>
    <property type="match status" value="1"/>
</dbReference>
<dbReference type="Gene3D" id="2.40.30.10">
    <property type="entry name" value="Translation factors"/>
    <property type="match status" value="1"/>
</dbReference>
<dbReference type="HAMAP" id="MF_00054_B">
    <property type="entry name" value="EF_G_EF_2_B"/>
    <property type="match status" value="1"/>
</dbReference>
<dbReference type="InterPro" id="IPR041095">
    <property type="entry name" value="EFG_II"/>
</dbReference>
<dbReference type="InterPro" id="IPR009022">
    <property type="entry name" value="EFG_III"/>
</dbReference>
<dbReference type="InterPro" id="IPR035647">
    <property type="entry name" value="EFG_III/V"/>
</dbReference>
<dbReference type="InterPro" id="IPR047872">
    <property type="entry name" value="EFG_IV"/>
</dbReference>
<dbReference type="InterPro" id="IPR035649">
    <property type="entry name" value="EFG_V"/>
</dbReference>
<dbReference type="InterPro" id="IPR000640">
    <property type="entry name" value="EFG_V-like"/>
</dbReference>
<dbReference type="InterPro" id="IPR004161">
    <property type="entry name" value="EFTu-like_2"/>
</dbReference>
<dbReference type="InterPro" id="IPR031157">
    <property type="entry name" value="G_TR_CS"/>
</dbReference>
<dbReference type="InterPro" id="IPR027417">
    <property type="entry name" value="P-loop_NTPase"/>
</dbReference>
<dbReference type="InterPro" id="IPR020568">
    <property type="entry name" value="Ribosomal_Su5_D2-typ_SF"/>
</dbReference>
<dbReference type="InterPro" id="IPR014721">
    <property type="entry name" value="Ribsml_uS5_D2-typ_fold_subgr"/>
</dbReference>
<dbReference type="InterPro" id="IPR005225">
    <property type="entry name" value="Small_GTP-bd"/>
</dbReference>
<dbReference type="InterPro" id="IPR000795">
    <property type="entry name" value="T_Tr_GTP-bd_dom"/>
</dbReference>
<dbReference type="InterPro" id="IPR009000">
    <property type="entry name" value="Transl_B-barrel_sf"/>
</dbReference>
<dbReference type="InterPro" id="IPR004540">
    <property type="entry name" value="Transl_elong_EFG/EF2"/>
</dbReference>
<dbReference type="InterPro" id="IPR005517">
    <property type="entry name" value="Transl_elong_EFG/EF2_IV"/>
</dbReference>
<dbReference type="NCBIfam" id="TIGR00484">
    <property type="entry name" value="EF-G"/>
    <property type="match status" value="1"/>
</dbReference>
<dbReference type="NCBIfam" id="NF009381">
    <property type="entry name" value="PRK12740.1-5"/>
    <property type="match status" value="1"/>
</dbReference>
<dbReference type="NCBIfam" id="TIGR00231">
    <property type="entry name" value="small_GTP"/>
    <property type="match status" value="1"/>
</dbReference>
<dbReference type="PANTHER" id="PTHR43261:SF1">
    <property type="entry name" value="RIBOSOME-RELEASING FACTOR 2, MITOCHONDRIAL"/>
    <property type="match status" value="1"/>
</dbReference>
<dbReference type="PANTHER" id="PTHR43261">
    <property type="entry name" value="TRANSLATION ELONGATION FACTOR G-RELATED"/>
    <property type="match status" value="1"/>
</dbReference>
<dbReference type="Pfam" id="PF00679">
    <property type="entry name" value="EFG_C"/>
    <property type="match status" value="1"/>
</dbReference>
<dbReference type="Pfam" id="PF14492">
    <property type="entry name" value="EFG_III"/>
    <property type="match status" value="1"/>
</dbReference>
<dbReference type="Pfam" id="PF03764">
    <property type="entry name" value="EFG_IV"/>
    <property type="match status" value="1"/>
</dbReference>
<dbReference type="Pfam" id="PF00009">
    <property type="entry name" value="GTP_EFTU"/>
    <property type="match status" value="1"/>
</dbReference>
<dbReference type="Pfam" id="PF03144">
    <property type="entry name" value="GTP_EFTU_D2"/>
    <property type="match status" value="1"/>
</dbReference>
<dbReference type="PRINTS" id="PR00315">
    <property type="entry name" value="ELONGATNFCT"/>
</dbReference>
<dbReference type="SMART" id="SM00838">
    <property type="entry name" value="EFG_C"/>
    <property type="match status" value="1"/>
</dbReference>
<dbReference type="SMART" id="SM00889">
    <property type="entry name" value="EFG_IV"/>
    <property type="match status" value="1"/>
</dbReference>
<dbReference type="SUPFAM" id="SSF54980">
    <property type="entry name" value="EF-G C-terminal domain-like"/>
    <property type="match status" value="2"/>
</dbReference>
<dbReference type="SUPFAM" id="SSF52540">
    <property type="entry name" value="P-loop containing nucleoside triphosphate hydrolases"/>
    <property type="match status" value="1"/>
</dbReference>
<dbReference type="SUPFAM" id="SSF54211">
    <property type="entry name" value="Ribosomal protein S5 domain 2-like"/>
    <property type="match status" value="1"/>
</dbReference>
<dbReference type="SUPFAM" id="SSF50447">
    <property type="entry name" value="Translation proteins"/>
    <property type="match status" value="1"/>
</dbReference>
<dbReference type="PROSITE" id="PS00301">
    <property type="entry name" value="G_TR_1"/>
    <property type="match status" value="1"/>
</dbReference>
<dbReference type="PROSITE" id="PS51722">
    <property type="entry name" value="G_TR_2"/>
    <property type="match status" value="1"/>
</dbReference>
<protein>
    <recommendedName>
        <fullName evidence="1">Elongation factor G</fullName>
        <shortName evidence="1">EF-G</shortName>
    </recommendedName>
</protein>
<keyword id="KW-0963">Cytoplasm</keyword>
<keyword id="KW-0251">Elongation factor</keyword>
<keyword id="KW-0342">GTP-binding</keyword>
<keyword id="KW-0547">Nucleotide-binding</keyword>
<keyword id="KW-0648">Protein biosynthesis</keyword>
<comment type="function">
    <text evidence="1">Catalyzes the GTP-dependent ribosomal translocation step during translation elongation. During this step, the ribosome changes from the pre-translocational (PRE) to the post-translocational (POST) state as the newly formed A-site-bound peptidyl-tRNA and P-site-bound deacylated tRNA move to the P and E sites, respectively. Catalyzes the coordinated movement of the two tRNA molecules, the mRNA and conformational changes in the ribosome.</text>
</comment>
<comment type="subcellular location">
    <subcellularLocation>
        <location evidence="1">Cytoplasm</location>
    </subcellularLocation>
</comment>
<comment type="similarity">
    <text evidence="1">Belongs to the TRAFAC class translation factor GTPase superfamily. Classic translation factor GTPase family. EF-G/EF-2 subfamily.</text>
</comment>
<accession>A9M3X0</accession>
<name>EFG_NEIM0</name>
<gene>
    <name evidence="1" type="primary">fusA</name>
    <name type="ordered locus">NMCC_2009</name>
</gene>
<feature type="chain" id="PRO_1000074962" description="Elongation factor G">
    <location>
        <begin position="1"/>
        <end position="701"/>
    </location>
</feature>
<feature type="domain" description="tr-type G">
    <location>
        <begin position="8"/>
        <end position="290"/>
    </location>
</feature>
<feature type="binding site" evidence="1">
    <location>
        <begin position="17"/>
        <end position="24"/>
    </location>
    <ligand>
        <name>GTP</name>
        <dbReference type="ChEBI" id="CHEBI:37565"/>
    </ligand>
</feature>
<feature type="binding site" evidence="1">
    <location>
        <begin position="88"/>
        <end position="92"/>
    </location>
    <ligand>
        <name>GTP</name>
        <dbReference type="ChEBI" id="CHEBI:37565"/>
    </ligand>
</feature>
<feature type="binding site" evidence="1">
    <location>
        <begin position="142"/>
        <end position="145"/>
    </location>
    <ligand>
        <name>GTP</name>
        <dbReference type="ChEBI" id="CHEBI:37565"/>
    </ligand>
</feature>
<proteinExistence type="inferred from homology"/>